<evidence type="ECO:0000250" key="1"/>
<evidence type="ECO:0000250" key="2">
    <source>
        <dbReference type="UniProtKB" id="O15056"/>
    </source>
</evidence>
<evidence type="ECO:0000250" key="3">
    <source>
        <dbReference type="UniProtKB" id="Q9D2G5"/>
    </source>
</evidence>
<evidence type="ECO:0000255" key="4">
    <source>
        <dbReference type="PROSITE-ProRule" id="PRU00176"/>
    </source>
</evidence>
<evidence type="ECO:0000255" key="5">
    <source>
        <dbReference type="PROSITE-ProRule" id="PRU00183"/>
    </source>
</evidence>
<evidence type="ECO:0000256" key="6">
    <source>
        <dbReference type="SAM" id="MobiDB-lite"/>
    </source>
</evidence>
<evidence type="ECO:0000269" key="7">
    <source>
    </source>
</evidence>
<evidence type="ECO:0000269" key="8">
    <source>
    </source>
</evidence>
<evidence type="ECO:0000303" key="9">
    <source>
    </source>
</evidence>
<evidence type="ECO:0000303" key="10">
    <source>
    </source>
</evidence>
<evidence type="ECO:0000305" key="11"/>
<accession>O55207</accession>
<accession>Q91ZD8</accession>
<accession>Q91ZD9</accession>
<feature type="chain" id="PRO_0000209735" description="Synaptojanin-2">
    <location>
        <begin position="1"/>
        <end position="1496"/>
    </location>
</feature>
<feature type="domain" description="SAC" evidence="5">
    <location>
        <begin position="120"/>
        <end position="444"/>
    </location>
</feature>
<feature type="domain" description="RRM" evidence="4">
    <location>
        <begin position="906"/>
        <end position="985"/>
    </location>
</feature>
<feature type="region of interest" description="Catalytic" evidence="1">
    <location>
        <begin position="450"/>
        <end status="unknown"/>
    </location>
</feature>
<feature type="region of interest" description="Disordered" evidence="6">
    <location>
        <begin position="1047"/>
        <end position="1083"/>
    </location>
</feature>
<feature type="region of interest" description="Disordered" evidence="6">
    <location>
        <begin position="1100"/>
        <end position="1149"/>
    </location>
</feature>
<feature type="region of interest" description="Disordered" evidence="6">
    <location>
        <begin position="1205"/>
        <end position="1357"/>
    </location>
</feature>
<feature type="region of interest" description="Disordered" evidence="6">
    <location>
        <begin position="1393"/>
        <end position="1413"/>
    </location>
</feature>
<feature type="region of interest" description="Disordered" evidence="6">
    <location>
        <begin position="1442"/>
        <end position="1461"/>
    </location>
</feature>
<feature type="region of interest" description="Disordered" evidence="6">
    <location>
        <begin position="1468"/>
        <end position="1496"/>
    </location>
</feature>
<feature type="compositionally biased region" description="Low complexity" evidence="6">
    <location>
        <begin position="1063"/>
        <end position="1074"/>
    </location>
</feature>
<feature type="compositionally biased region" description="Pro residues" evidence="6">
    <location>
        <begin position="1116"/>
        <end position="1130"/>
    </location>
</feature>
<feature type="compositionally biased region" description="Polar residues" evidence="6">
    <location>
        <begin position="1139"/>
        <end position="1149"/>
    </location>
</feature>
<feature type="compositionally biased region" description="Pro residues" evidence="6">
    <location>
        <begin position="1230"/>
        <end position="1239"/>
    </location>
</feature>
<feature type="compositionally biased region" description="Pro residues" evidence="6">
    <location>
        <begin position="1279"/>
        <end position="1292"/>
    </location>
</feature>
<feature type="compositionally biased region" description="Low complexity" evidence="6">
    <location>
        <begin position="1324"/>
        <end position="1338"/>
    </location>
</feature>
<feature type="compositionally biased region" description="Basic and acidic residues" evidence="6">
    <location>
        <begin position="1470"/>
        <end position="1480"/>
    </location>
</feature>
<feature type="compositionally biased region" description="Basic and acidic residues" evidence="6">
    <location>
        <begin position="1487"/>
        <end position="1496"/>
    </location>
</feature>
<feature type="modified residue" description="Phosphoserine" evidence="2">
    <location>
        <position position="1139"/>
    </location>
</feature>
<feature type="splice variant" id="VSP_012914" description="In isoform 2B1." evidence="9">
    <location>
        <begin position="1085"/>
        <end position="1129"/>
    </location>
</feature>
<feature type="splice variant" id="VSP_012915" description="In isoform 2A." evidence="10">
    <original>PMLPEEQCEQQPVHFTMASQEMNLETPPPITAPIPPVPKP</original>
    <variation>IVFCSSSQASQPCSLLQRHEFVRTVAAQRLTPVDASGSSV</variation>
    <location>
        <begin position="1254"/>
        <end position="1293"/>
    </location>
</feature>
<feature type="splice variant" id="VSP_012916" description="In isoform 2A." evidence="10">
    <location>
        <begin position="1294"/>
        <end position="1496"/>
    </location>
</feature>
<feature type="mutagenesis site" description="Abolishes phosphatase activity." evidence="8">
    <original>D</original>
    <variation>N</variation>
    <location>
        <position position="388"/>
    </location>
</feature>
<feature type="mutagenesis site" description="Reduced phosphatase activity." evidence="8">
    <original>G</original>
    <variation>V</variation>
    <location>
        <position position="435"/>
    </location>
</feature>
<feature type="mutagenesis site" description="No effect." evidence="8">
    <original>R</original>
    <variation>H</variation>
    <location>
        <position position="466"/>
    </location>
</feature>
<feature type="sequence conflict" description="In Ref. 2; AAK61722." evidence="11" ref="2">
    <original>T</original>
    <variation>A</variation>
    <location>
        <position position="1130"/>
    </location>
</feature>
<dbReference type="EC" id="3.1.3.36" evidence="3"/>
<dbReference type="EMBL" id="U90312">
    <property type="protein sequence ID" value="AAB92481.1"/>
    <property type="molecule type" value="mRNA"/>
</dbReference>
<dbReference type="EMBL" id="AY034050">
    <property type="protein sequence ID" value="AAK61722.1"/>
    <property type="molecule type" value="mRNA"/>
</dbReference>
<dbReference type="EMBL" id="AY034051">
    <property type="protein sequence ID" value="AAK61723.1"/>
    <property type="molecule type" value="mRNA"/>
</dbReference>
<dbReference type="RefSeq" id="NP_001106842.1">
    <property type="nucleotide sequence ID" value="NM_001113371.1"/>
</dbReference>
<dbReference type="RefSeq" id="NP_001106843.1">
    <property type="nucleotide sequence ID" value="NM_001113372.1"/>
</dbReference>
<dbReference type="RefSeq" id="NP_114460.1">
    <property type="nucleotide sequence ID" value="NM_032071.2"/>
</dbReference>
<dbReference type="SMR" id="O55207"/>
<dbReference type="ELM" id="O55207"/>
<dbReference type="FunCoup" id="O55207">
    <property type="interactions" value="456"/>
</dbReference>
<dbReference type="IntAct" id="O55207">
    <property type="interactions" value="1"/>
</dbReference>
<dbReference type="MINT" id="O55207"/>
<dbReference type="STRING" id="10116.ENSRNOP00000059744"/>
<dbReference type="iPTMnet" id="O55207"/>
<dbReference type="PhosphoSitePlus" id="O55207"/>
<dbReference type="PaxDb" id="10116-ENSRNOP00000062564"/>
<dbReference type="GeneID" id="84018"/>
<dbReference type="KEGG" id="rno:84018"/>
<dbReference type="AGR" id="RGD:69436"/>
<dbReference type="CTD" id="8871"/>
<dbReference type="RGD" id="69436">
    <property type="gene designation" value="Synj2"/>
</dbReference>
<dbReference type="eggNOG" id="KOG0566">
    <property type="taxonomic scope" value="Eukaryota"/>
</dbReference>
<dbReference type="InParanoid" id="O55207"/>
<dbReference type="OrthoDB" id="55770at9989"/>
<dbReference type="PhylomeDB" id="O55207"/>
<dbReference type="Reactome" id="R-RNO-1660499">
    <property type="pathway name" value="Synthesis of PIPs at the plasma membrane"/>
</dbReference>
<dbReference type="Reactome" id="R-RNO-8856828">
    <property type="pathway name" value="Clathrin-mediated endocytosis"/>
</dbReference>
<dbReference type="PRO" id="PR:O55207"/>
<dbReference type="Proteomes" id="UP000002494">
    <property type="component" value="Unplaced"/>
</dbReference>
<dbReference type="GO" id="GO:0043679">
    <property type="term" value="C:axon terminus"/>
    <property type="evidence" value="ECO:0000314"/>
    <property type="project" value="RGD"/>
</dbReference>
<dbReference type="GO" id="GO:0005737">
    <property type="term" value="C:cytoplasm"/>
    <property type="evidence" value="ECO:0000318"/>
    <property type="project" value="GO_Central"/>
</dbReference>
<dbReference type="GO" id="GO:0005881">
    <property type="term" value="C:cytoplasmic microtubule"/>
    <property type="evidence" value="ECO:0000314"/>
    <property type="project" value="RGD"/>
</dbReference>
<dbReference type="GO" id="GO:0016020">
    <property type="term" value="C:membrane"/>
    <property type="evidence" value="ECO:0000318"/>
    <property type="project" value="GO_Central"/>
</dbReference>
<dbReference type="GO" id="GO:0045121">
    <property type="term" value="C:membrane raft"/>
    <property type="evidence" value="ECO:0007669"/>
    <property type="project" value="UniProtKB-SubCell"/>
</dbReference>
<dbReference type="GO" id="GO:0005739">
    <property type="term" value="C:mitochondrion"/>
    <property type="evidence" value="ECO:0007669"/>
    <property type="project" value="UniProtKB-SubCell"/>
</dbReference>
<dbReference type="GO" id="GO:0048471">
    <property type="term" value="C:perinuclear region of cytoplasm"/>
    <property type="evidence" value="ECO:0000318"/>
    <property type="project" value="GO_Central"/>
</dbReference>
<dbReference type="GO" id="GO:0098793">
    <property type="term" value="C:presynapse"/>
    <property type="evidence" value="ECO:0000314"/>
    <property type="project" value="SynGO"/>
</dbReference>
<dbReference type="GO" id="GO:0032587">
    <property type="term" value="C:ruffle membrane"/>
    <property type="evidence" value="ECO:0000314"/>
    <property type="project" value="RGD"/>
</dbReference>
<dbReference type="GO" id="GO:0052659">
    <property type="term" value="F:inositol-1,3,4,5-tetrakisphosphate 5-phosphatase activity"/>
    <property type="evidence" value="ECO:0000314"/>
    <property type="project" value="RGD"/>
</dbReference>
<dbReference type="GO" id="GO:0052658">
    <property type="term" value="F:inositol-1,4,5-trisphosphate 5-phosphatase activity"/>
    <property type="evidence" value="ECO:0000314"/>
    <property type="project" value="RGD"/>
</dbReference>
<dbReference type="GO" id="GO:0030165">
    <property type="term" value="F:PDZ domain binding"/>
    <property type="evidence" value="ECO:0000353"/>
    <property type="project" value="RGD"/>
</dbReference>
<dbReference type="GO" id="GO:0052744">
    <property type="term" value="F:phosphatidylinositol monophosphate phosphatase activity"/>
    <property type="evidence" value="ECO:0000314"/>
    <property type="project" value="RGD"/>
</dbReference>
<dbReference type="GO" id="GO:0004439">
    <property type="term" value="F:phosphatidylinositol-4,5-bisphosphate 5-phosphatase activity"/>
    <property type="evidence" value="ECO:0000266"/>
    <property type="project" value="RGD"/>
</dbReference>
<dbReference type="GO" id="GO:0003723">
    <property type="term" value="F:RNA binding"/>
    <property type="evidence" value="ECO:0007669"/>
    <property type="project" value="UniProtKB-KW"/>
</dbReference>
<dbReference type="GO" id="GO:0017124">
    <property type="term" value="F:SH3 domain binding"/>
    <property type="evidence" value="ECO:0000353"/>
    <property type="project" value="RGD"/>
</dbReference>
<dbReference type="GO" id="GO:0071545">
    <property type="term" value="P:inositol phosphate catabolic process"/>
    <property type="evidence" value="ECO:0000314"/>
    <property type="project" value="RGD"/>
</dbReference>
<dbReference type="GO" id="GO:0046856">
    <property type="term" value="P:phosphatidylinositol dephosphorylation"/>
    <property type="evidence" value="ECO:0000314"/>
    <property type="project" value="RGD"/>
</dbReference>
<dbReference type="GO" id="GO:0048488">
    <property type="term" value="P:synaptic vesicle endocytosis"/>
    <property type="evidence" value="ECO:0000266"/>
    <property type="project" value="RGD"/>
</dbReference>
<dbReference type="CDD" id="cd12720">
    <property type="entry name" value="RRM_SYNJ2"/>
    <property type="match status" value="1"/>
</dbReference>
<dbReference type="FunFam" id="3.30.70.330:FF:000204">
    <property type="entry name" value="Synaptojanin 2"/>
    <property type="match status" value="1"/>
</dbReference>
<dbReference type="FunFam" id="3.60.10.10:FF:000008">
    <property type="entry name" value="Synaptojanin 2"/>
    <property type="match status" value="1"/>
</dbReference>
<dbReference type="Gene3D" id="3.30.70.330">
    <property type="match status" value="1"/>
</dbReference>
<dbReference type="Gene3D" id="3.60.10.10">
    <property type="entry name" value="Endonuclease/exonuclease/phosphatase"/>
    <property type="match status" value="1"/>
</dbReference>
<dbReference type="InterPro" id="IPR036691">
    <property type="entry name" value="Endo/exonu/phosph_ase_sf"/>
</dbReference>
<dbReference type="InterPro" id="IPR046985">
    <property type="entry name" value="IP5"/>
</dbReference>
<dbReference type="InterPro" id="IPR000300">
    <property type="entry name" value="IPPc"/>
</dbReference>
<dbReference type="InterPro" id="IPR012677">
    <property type="entry name" value="Nucleotide-bd_a/b_plait_sf"/>
</dbReference>
<dbReference type="InterPro" id="IPR035979">
    <property type="entry name" value="RBD_domain_sf"/>
</dbReference>
<dbReference type="InterPro" id="IPR000504">
    <property type="entry name" value="RRM_dom"/>
</dbReference>
<dbReference type="InterPro" id="IPR002013">
    <property type="entry name" value="SAC_dom"/>
</dbReference>
<dbReference type="InterPro" id="IPR015047">
    <property type="entry name" value="SYNJ1/2_RRM"/>
</dbReference>
<dbReference type="InterPro" id="IPR034973">
    <property type="entry name" value="SYNJ2_RRM"/>
</dbReference>
<dbReference type="PANTHER" id="PTHR11200">
    <property type="entry name" value="INOSITOL 5-PHOSPHATASE"/>
    <property type="match status" value="1"/>
</dbReference>
<dbReference type="PANTHER" id="PTHR11200:SF148">
    <property type="entry name" value="SYNAPTOJANIN-2"/>
    <property type="match status" value="1"/>
</dbReference>
<dbReference type="Pfam" id="PF08952">
    <property type="entry name" value="DUF1866"/>
    <property type="match status" value="1"/>
</dbReference>
<dbReference type="Pfam" id="PF22669">
    <property type="entry name" value="Exo_endo_phos2"/>
    <property type="match status" value="1"/>
</dbReference>
<dbReference type="Pfam" id="PF02383">
    <property type="entry name" value="Syja_N"/>
    <property type="match status" value="1"/>
</dbReference>
<dbReference type="SMART" id="SM01165">
    <property type="entry name" value="DUF1866"/>
    <property type="match status" value="1"/>
</dbReference>
<dbReference type="SMART" id="SM00128">
    <property type="entry name" value="IPPc"/>
    <property type="match status" value="1"/>
</dbReference>
<dbReference type="SUPFAM" id="SSF56219">
    <property type="entry name" value="DNase I-like"/>
    <property type="match status" value="1"/>
</dbReference>
<dbReference type="SUPFAM" id="SSF54928">
    <property type="entry name" value="RNA-binding domain, RBD"/>
    <property type="match status" value="1"/>
</dbReference>
<dbReference type="PROSITE" id="PS50102">
    <property type="entry name" value="RRM"/>
    <property type="match status" value="1"/>
</dbReference>
<dbReference type="PROSITE" id="PS50275">
    <property type="entry name" value="SAC"/>
    <property type="match status" value="1"/>
</dbReference>
<keyword id="KW-0025">Alternative splicing</keyword>
<keyword id="KW-1003">Cell membrane</keyword>
<keyword id="KW-0966">Cell projection</keyword>
<keyword id="KW-0963">Cytoplasm</keyword>
<keyword id="KW-0206">Cytoskeleton</keyword>
<keyword id="KW-0378">Hydrolase</keyword>
<keyword id="KW-0443">Lipid metabolism</keyword>
<keyword id="KW-0472">Membrane</keyword>
<keyword id="KW-0496">Mitochondrion</keyword>
<keyword id="KW-0597">Phosphoprotein</keyword>
<keyword id="KW-1185">Reference proteome</keyword>
<keyword id="KW-0694">RNA-binding</keyword>
<keyword id="KW-0770">Synapse</keyword>
<proteinExistence type="evidence at protein level"/>
<organism>
    <name type="scientific">Rattus norvegicus</name>
    <name type="common">Rat</name>
    <dbReference type="NCBI Taxonomy" id="10116"/>
    <lineage>
        <taxon>Eukaryota</taxon>
        <taxon>Metazoa</taxon>
        <taxon>Chordata</taxon>
        <taxon>Craniata</taxon>
        <taxon>Vertebrata</taxon>
        <taxon>Euteleostomi</taxon>
        <taxon>Mammalia</taxon>
        <taxon>Eutheria</taxon>
        <taxon>Euarchontoglires</taxon>
        <taxon>Glires</taxon>
        <taxon>Rodentia</taxon>
        <taxon>Myomorpha</taxon>
        <taxon>Muroidea</taxon>
        <taxon>Muridae</taxon>
        <taxon>Murinae</taxon>
        <taxon>Rattus</taxon>
    </lineage>
</organism>
<protein>
    <recommendedName>
        <fullName>Synaptojanin-2</fullName>
        <ecNumber evidence="3">3.1.3.36</ecNumber>
    </recommendedName>
    <alternativeName>
        <fullName>Synaptic inositol 1,4,5-trisphosphate 5-phosphatase 2</fullName>
    </alternativeName>
</protein>
<reference key="1">
    <citation type="journal article" date="1997" name="J. Biol. Chem.">
        <title>Synaptojanin 2, a novel synaptojanin isoform with a distinct targeting domain and expression pattern.</title>
        <authorList>
            <person name="Nemoto Y."/>
            <person name="Arribas M."/>
            <person name="Haffner C."/>
            <person name="de Camilli P."/>
        </authorList>
    </citation>
    <scope>NUCLEOTIDE SEQUENCE [MRNA] (ISOFORM 2A)</scope>
    <scope>CHARACTERIZATION</scope>
    <source>
        <tissue>Brain</tissue>
    </source>
</reference>
<reference key="2">
    <citation type="journal article" date="2001" name="J. Biol. Chem.">
        <title>Identification and characterization of a synaptojanin 2 splice isoform predominantly expressed in nerve terminals.</title>
        <authorList>
            <person name="Nemoto Y."/>
            <person name="Wenk M.R."/>
            <person name="Watanabe M."/>
            <person name="Daniell L."/>
            <person name="Murakami T."/>
            <person name="Ringstad N."/>
            <person name="Yamada H."/>
            <person name="Takei K."/>
            <person name="De Camilli P."/>
        </authorList>
    </citation>
    <scope>NUCLEOTIDE SEQUENCE [MRNA] (ISOFORMS 2B1 AND 2B2)</scope>
    <scope>SUBCELLULAR LOCATION</scope>
    <scope>MUTAGENESIS OF ASP-388; GLY-435 AND ARG-466</scope>
    <source>
        <strain>Sprague-Dawley</strain>
    </source>
</reference>
<reference key="3">
    <citation type="journal article" date="1999" name="EMBO J.">
        <title>Recruitment of an alternatively spliced form of synaptojanin 2 to mitochondria by the interaction with the PDZ domain of a mitochondrial outer membrane protein.</title>
        <authorList>
            <person name="Nemoto Y."/>
            <person name="De Camilli P."/>
        </authorList>
    </citation>
    <scope>INTERACTION WITH SYNJ2BP</scope>
    <scope>SUBCELLULAR LOCATION (ISOFORM 2A)</scope>
    <scope>MUTAGENESIS</scope>
</reference>
<gene>
    <name type="primary">Synj2</name>
</gene>
<comment type="function">
    <text evidence="1">Inositol 5-phosphatase which may be involved in distinct membrane trafficking and signal transduction pathways. May mediate the inhibitory effect of Rac1 on endocytosis (By similarity).</text>
</comment>
<comment type="catalytic activity">
    <reaction evidence="3">
        <text>a 1,2-diacyl-sn-glycero-3-phospho-(1D-myo-inositol-4,5-bisphosphate) + H2O = a 1,2-diacyl-sn-glycero-3-phospho-(1D-myo-inositol 4-phosphate) + phosphate</text>
        <dbReference type="Rhea" id="RHEA:22764"/>
        <dbReference type="ChEBI" id="CHEBI:15377"/>
        <dbReference type="ChEBI" id="CHEBI:43474"/>
        <dbReference type="ChEBI" id="CHEBI:58178"/>
        <dbReference type="ChEBI" id="CHEBI:58456"/>
        <dbReference type="EC" id="3.1.3.36"/>
    </reaction>
</comment>
<comment type="subunit">
    <text evidence="1 7">Binds to GRB2 (By similarity). Isoform 2A binds to SYNJ2BP/OMP25.</text>
</comment>
<comment type="interaction">
    <interactant intactId="EBI-7007476">
        <id>O55207-3</id>
    </interactant>
    <interactant intactId="EBI-7007454">
        <id>Q9WVJ4</id>
        <label>Synj2bp</label>
    </interactant>
    <organismsDiffer>false</organismsDiffer>
    <experiments>9</experiments>
</comment>
<comment type="subcellular location">
    <subcellularLocation>
        <location evidence="8">Cytoplasm</location>
    </subcellularLocation>
    <subcellularLocation>
        <location evidence="8">Cell membrane</location>
    </subcellularLocation>
    <subcellularLocation>
        <location evidence="8">Presynapse</location>
    </subcellularLocation>
    <subcellularLocation>
        <location evidence="8">Cytoplasm</location>
        <location evidence="8">Cytoskeleton</location>
    </subcellularLocation>
    <subcellularLocation>
        <location>Membrane raft</location>
    </subcellularLocation>
    <text evidence="8">Localizes at presynapse terminals in brain and at bundles of microtubules surrounding the nucleus in the elongating spermatids corresponding to the manchette (PubMed:11498538). Translocates from the cytoplasm to membrane ruffles in a RAC1-dependent manner (PubMed:11498538).</text>
</comment>
<comment type="subcellular location">
    <molecule>Isoform 2A</molecule>
    <subcellularLocation>
        <location evidence="7">Mitochondrion</location>
    </subcellularLocation>
    <text evidence="7">Interaction of isoform 2A with SYNJ2BP/OMP25 results in localization to the mitochondrion (PubMed:10357812).</text>
</comment>
<comment type="alternative products">
    <event type="alternative splicing"/>
    <isoform>
        <id>O55207-1</id>
        <name>2B2</name>
        <sequence type="displayed"/>
    </isoform>
    <isoform>
        <id>O55207-2</id>
        <name>2B1</name>
        <sequence type="described" ref="VSP_012914"/>
    </isoform>
    <isoform>
        <id>O55207-3</id>
        <name>2A</name>
        <name>7.5kb</name>
        <sequence type="described" ref="VSP_012915 VSP_012916"/>
    </isoform>
    <isoform>
        <id>O55207-4</id>
        <name>7.2kb</name>
        <sequence type="not described"/>
    </isoform>
    <isoform>
        <id>O55207-5</id>
        <name>6.0kb</name>
        <sequence type="not described"/>
    </isoform>
    <isoform>
        <id>O55207-6</id>
        <name>5.2kb</name>
        <sequence type="not described"/>
    </isoform>
    <isoform>
        <id>O55207-7</id>
        <name>3.5kb</name>
        <sequence type="not described"/>
    </isoform>
    <text>Additional isoforms seem to exist. Experimental confirmation may be lacking for some isoforms.</text>
</comment>
<comment type="tissue specificity">
    <text>Widely expressed. Isoforms 2B1 and 2B2 are concentrated at nerve terminals in brain and at spermatid manchette in testis.</text>
</comment>
<comment type="miscellaneous">
    <molecule>Isoform 2A</molecule>
    <text evidence="11">The PDZ domain of isoform 2A binds SYNJ2BP/OMP25. Mutagenesis of Ser-1246 or Val-1248 to Ala abolishes SYNJ2BP/OMP25 binding.</text>
</comment>
<comment type="similarity">
    <text evidence="11">Belongs to the synaptojanin family.</text>
</comment>
<comment type="similarity">
    <text evidence="11">In the central section; belongs to the inositol 1,4,5-trisphosphate 5-phosphatase family.</text>
</comment>
<sequence length="1496" mass="165264">MALSKGLRLLARLDPTGPSSVLLEARGRGDCLLFEAGAVATLAPEEKEVIKGLYGKPTDAYGCLGELSLKSGGVPLSFLVLVTGCTSVGRIPDAEIYKITGTEFYPLQEEAKEEDRLPALKKILSSGVFYFAWPNDGACFDLTIRAQKQGDDCSEWGTSFFWNQLLHVPLRQHQVNCHDWLLKVICGVVTIRTVYASHKQAKACLISRISCERAGARFLTRGVNDDGHVSNFVETEQAIYMDDGVSSFVQIRGSVPLFWEQPGLQVGSHHLRLHRGLEANAPAFERHMVLLKEQYGQQVVVNLLGSRGGEEVLNRAFKKLLWASCHAGDTPMINFDFHQFAKGRKLEKLENLLRPQLKLHWDDFGVFAKGENVSPRFQKGTLRMNCLDCLDRTNTVQCFIALEVLHLQLESLGLNSKPITDRFVESFKAMWSLNGHGLSKVFTGSRALEGKAKVGKLKDGARSMSRTIQSNFFDGVKQEAIKLLLVGDVYNEESTDKGRMLLDNTALLGLGSNKQNSLSGMLDGKATPRILKAMTERQSEFTNFKRIQIAMGTWNVNGGKQFRSNLLGTTELTDWLLDAPQLSGAVDSQDDGGPADIFAVGFEEMVELSAGNIVNASTTNRKMWGEQLQKAISRSHRYILLTSAQLVGVCLYIFVRPYHVPFIRDVAIDTVKTGMGGKAGNKGAVGIRFQFHSTSFCFICSHLTAGQSQVKERNEDYREITHKLSFPSGRNIFSHDYVFWCGDFNYRIDLTYEEVFYFVKRQDWKKLMEFDQLQLQKSSGKIFKDFHEGTINFGPTYKYDVGSAAYDTSDKCRTPAWTDRVLWWRKKHPYDKTAGELNLLDSDLDGDANIRHTWSPGTLKYYGRAELQASDHRPVLAIVEVEVQEVDVGARERVFQEVSSVQGPLDATVIVNLQSPTLEERNEFPEDLRTELMQTLGNYGTIILVRINQGQMLVTFADSHSALSVLDVDGMKVKGRAVKIRPKTKDWLEGLREELIRKRDSMAPVSPTANSCLLEENFDFTSLDYESEGDVLEDDEDYLADEFGQPVVSDSELGGDDSSDTMSASTPASKSPALAKKKQHPTYKDDADLMTLKLELEVAGNFRHRSPSRSLSVPNRPRPPHPPQRPPPPTGLMVKKSASDASISSGTHGQYSILQTAKLLPGAPQQPPKARTGISKPYNVKQIKTTNAQEAEAAIRCLLEAGGGVPESAPGATPLRNQGSSKPEASLGPPVLPRRPVPRVPTMKKPTLRRTGKPMLPEEQCEQQPVHFTMASQEMNLETPPPITAPIPPVPKPRTFQPGRGVERRPSGGKPEPDDAPPVTGAVELSSPEAPEAPSLAPKVPPRRKKSAPAAFHLQVLQSNSQLLQGLTCSSSSPSPPKPDTPLLYPQMALGTSSAISPETDGPRVTEPEAASFHGDYPDPFWSLLHHPKLLNNNTWLSKSSEPLDLGSRTPERTHTDSAQVNASVVERGLPPDHGGKDFSHWMAASNKDKRTTLGV</sequence>
<name>SYNJ2_RAT</name>